<feature type="chain" id="PRO_1000067313" description="L-aspartate dehydrogenase">
    <location>
        <begin position="1"/>
        <end position="264"/>
    </location>
</feature>
<feature type="active site" evidence="1">
    <location>
        <position position="216"/>
    </location>
</feature>
<feature type="binding site" evidence="1">
    <location>
        <position position="120"/>
    </location>
    <ligand>
        <name>NAD(+)</name>
        <dbReference type="ChEBI" id="CHEBI:57540"/>
    </ligand>
</feature>
<feature type="binding site" evidence="1">
    <location>
        <position position="186"/>
    </location>
    <ligand>
        <name>NAD(+)</name>
        <dbReference type="ChEBI" id="CHEBI:57540"/>
    </ligand>
</feature>
<accession>A8GIW3</accession>
<dbReference type="EC" id="1.4.1.21" evidence="1"/>
<dbReference type="EMBL" id="CP000826">
    <property type="protein sequence ID" value="ABV43053.1"/>
    <property type="molecule type" value="Genomic_DNA"/>
</dbReference>
<dbReference type="SMR" id="A8GIW3"/>
<dbReference type="STRING" id="399741.Spro_3958"/>
<dbReference type="KEGG" id="spe:Spro_3958"/>
<dbReference type="eggNOG" id="COG1712">
    <property type="taxonomic scope" value="Bacteria"/>
</dbReference>
<dbReference type="HOGENOM" id="CLU_089550_0_0_6"/>
<dbReference type="OrthoDB" id="7056904at2"/>
<dbReference type="UniPathway" id="UPA00253">
    <property type="reaction ID" value="UER00456"/>
</dbReference>
<dbReference type="GO" id="GO:0033735">
    <property type="term" value="F:aspartate dehydrogenase activity"/>
    <property type="evidence" value="ECO:0007669"/>
    <property type="project" value="UniProtKB-EC"/>
</dbReference>
<dbReference type="GO" id="GO:0051287">
    <property type="term" value="F:NAD binding"/>
    <property type="evidence" value="ECO:0007669"/>
    <property type="project" value="UniProtKB-UniRule"/>
</dbReference>
<dbReference type="GO" id="GO:0050661">
    <property type="term" value="F:NADP binding"/>
    <property type="evidence" value="ECO:0007669"/>
    <property type="project" value="UniProtKB-UniRule"/>
</dbReference>
<dbReference type="GO" id="GO:0016639">
    <property type="term" value="F:oxidoreductase activity, acting on the CH-NH2 group of donors, NAD or NADP as acceptor"/>
    <property type="evidence" value="ECO:0007669"/>
    <property type="project" value="UniProtKB-UniRule"/>
</dbReference>
<dbReference type="GO" id="GO:0009435">
    <property type="term" value="P:NAD biosynthetic process"/>
    <property type="evidence" value="ECO:0007669"/>
    <property type="project" value="UniProtKB-UniRule"/>
</dbReference>
<dbReference type="Gene3D" id="3.30.360.10">
    <property type="entry name" value="Dihydrodipicolinate Reductase, domain 2"/>
    <property type="match status" value="1"/>
</dbReference>
<dbReference type="Gene3D" id="3.40.50.720">
    <property type="entry name" value="NAD(P)-binding Rossmann-like Domain"/>
    <property type="match status" value="1"/>
</dbReference>
<dbReference type="HAMAP" id="MF_01265">
    <property type="entry name" value="NadX"/>
    <property type="match status" value="1"/>
</dbReference>
<dbReference type="InterPro" id="IPR005106">
    <property type="entry name" value="Asp/hSer_DH_NAD-bd"/>
</dbReference>
<dbReference type="InterPro" id="IPR002811">
    <property type="entry name" value="Asp_DH"/>
</dbReference>
<dbReference type="InterPro" id="IPR020626">
    <property type="entry name" value="Asp_DH_prok"/>
</dbReference>
<dbReference type="InterPro" id="IPR011182">
    <property type="entry name" value="L-Asp_DH"/>
</dbReference>
<dbReference type="InterPro" id="IPR036291">
    <property type="entry name" value="NAD(P)-bd_dom_sf"/>
</dbReference>
<dbReference type="NCBIfam" id="NF009827">
    <property type="entry name" value="PRK13303.1-2"/>
    <property type="match status" value="1"/>
</dbReference>
<dbReference type="NCBIfam" id="NF009828">
    <property type="entry name" value="PRK13303.1-3"/>
    <property type="match status" value="1"/>
</dbReference>
<dbReference type="PANTHER" id="PTHR31873:SF6">
    <property type="entry name" value="ASPARTATE DEHYDROGENASE DOMAIN-CONTAINING PROTEIN"/>
    <property type="match status" value="1"/>
</dbReference>
<dbReference type="PANTHER" id="PTHR31873">
    <property type="entry name" value="L-ASPARTATE DEHYDROGENASE-RELATED"/>
    <property type="match status" value="1"/>
</dbReference>
<dbReference type="Pfam" id="PF01958">
    <property type="entry name" value="Asp_DH_C"/>
    <property type="match status" value="1"/>
</dbReference>
<dbReference type="Pfam" id="PF03447">
    <property type="entry name" value="NAD_binding_3"/>
    <property type="match status" value="1"/>
</dbReference>
<dbReference type="PIRSF" id="PIRSF005227">
    <property type="entry name" value="Asp_dh_NAD_syn"/>
    <property type="match status" value="1"/>
</dbReference>
<dbReference type="SUPFAM" id="SSF55347">
    <property type="entry name" value="Glyceraldehyde-3-phosphate dehydrogenase-like, C-terminal domain"/>
    <property type="match status" value="1"/>
</dbReference>
<dbReference type="SUPFAM" id="SSF51735">
    <property type="entry name" value="NAD(P)-binding Rossmann-fold domains"/>
    <property type="match status" value="1"/>
</dbReference>
<sequence length="264" mass="27768">MKKIMMIGYGAMAREVLSRLPDGVSVGWILARAAHHAAIDSAFGGQVQALTHPDQCTEQPDLVLECASQQAVAEFGEAVVTRGWPLAVISTGALADAALQQRLQQACRQHQGQLIVLSGAVAGMDGLASAREGGLDSVTYQACKSPASWRGSMAEQLIDLDAVSEAQVFFEGSAREAARLFPANANVAATIALNGLGMDATRVRLLVDPATRRNTHRLQVCGNFGEFQIELSGNPLASNPKTSTLAALSAVQACRRLVDGGFIA</sequence>
<keyword id="KW-0520">NAD</keyword>
<keyword id="KW-0521">NADP</keyword>
<keyword id="KW-0560">Oxidoreductase</keyword>
<keyword id="KW-0662">Pyridine nucleotide biosynthesis</keyword>
<name>ASPD_SERP5</name>
<organism>
    <name type="scientific">Serratia proteamaculans (strain 568)</name>
    <dbReference type="NCBI Taxonomy" id="399741"/>
    <lineage>
        <taxon>Bacteria</taxon>
        <taxon>Pseudomonadati</taxon>
        <taxon>Pseudomonadota</taxon>
        <taxon>Gammaproteobacteria</taxon>
        <taxon>Enterobacterales</taxon>
        <taxon>Yersiniaceae</taxon>
        <taxon>Serratia</taxon>
    </lineage>
</organism>
<protein>
    <recommendedName>
        <fullName evidence="1">L-aspartate dehydrogenase</fullName>
        <ecNumber evidence="1">1.4.1.21</ecNumber>
    </recommendedName>
</protein>
<gene>
    <name evidence="1" type="primary">nadX</name>
    <name type="ordered locus">Spro_3958</name>
</gene>
<evidence type="ECO:0000255" key="1">
    <source>
        <dbReference type="HAMAP-Rule" id="MF_01265"/>
    </source>
</evidence>
<reference key="1">
    <citation type="submission" date="2007-09" db="EMBL/GenBank/DDBJ databases">
        <title>Complete sequence of chromosome of Serratia proteamaculans 568.</title>
        <authorList>
            <consortium name="US DOE Joint Genome Institute"/>
            <person name="Copeland A."/>
            <person name="Lucas S."/>
            <person name="Lapidus A."/>
            <person name="Barry K."/>
            <person name="Glavina del Rio T."/>
            <person name="Dalin E."/>
            <person name="Tice H."/>
            <person name="Pitluck S."/>
            <person name="Chain P."/>
            <person name="Malfatti S."/>
            <person name="Shin M."/>
            <person name="Vergez L."/>
            <person name="Schmutz J."/>
            <person name="Larimer F."/>
            <person name="Land M."/>
            <person name="Hauser L."/>
            <person name="Kyrpides N."/>
            <person name="Kim E."/>
            <person name="Taghavi S."/>
            <person name="Newman L."/>
            <person name="Vangronsveld J."/>
            <person name="van der Lelie D."/>
            <person name="Richardson P."/>
        </authorList>
    </citation>
    <scope>NUCLEOTIDE SEQUENCE [LARGE SCALE GENOMIC DNA]</scope>
    <source>
        <strain>568</strain>
    </source>
</reference>
<comment type="function">
    <text evidence="1">Specifically catalyzes the NAD or NADP-dependent dehydrogenation of L-aspartate to iminoaspartate.</text>
</comment>
<comment type="catalytic activity">
    <reaction evidence="1">
        <text>L-aspartate + NADP(+) + H2O = oxaloacetate + NH4(+) + NADPH + H(+)</text>
        <dbReference type="Rhea" id="RHEA:11784"/>
        <dbReference type="ChEBI" id="CHEBI:15377"/>
        <dbReference type="ChEBI" id="CHEBI:15378"/>
        <dbReference type="ChEBI" id="CHEBI:16452"/>
        <dbReference type="ChEBI" id="CHEBI:28938"/>
        <dbReference type="ChEBI" id="CHEBI:29991"/>
        <dbReference type="ChEBI" id="CHEBI:57783"/>
        <dbReference type="ChEBI" id="CHEBI:58349"/>
        <dbReference type="EC" id="1.4.1.21"/>
    </reaction>
</comment>
<comment type="catalytic activity">
    <reaction evidence="1">
        <text>L-aspartate + NAD(+) + H2O = oxaloacetate + NH4(+) + NADH + H(+)</text>
        <dbReference type="Rhea" id="RHEA:11788"/>
        <dbReference type="ChEBI" id="CHEBI:15377"/>
        <dbReference type="ChEBI" id="CHEBI:15378"/>
        <dbReference type="ChEBI" id="CHEBI:16452"/>
        <dbReference type="ChEBI" id="CHEBI:28938"/>
        <dbReference type="ChEBI" id="CHEBI:29991"/>
        <dbReference type="ChEBI" id="CHEBI:57540"/>
        <dbReference type="ChEBI" id="CHEBI:57945"/>
        <dbReference type="EC" id="1.4.1.21"/>
    </reaction>
</comment>
<comment type="pathway">
    <text evidence="1">Cofactor biosynthesis; NAD(+) biosynthesis; iminoaspartate from L-aspartate (dehydrogenase route): step 1/1.</text>
</comment>
<comment type="miscellaneous">
    <text evidence="1">The iminoaspartate product is unstable in aqueous solution and can decompose to oxaloacetate and ammonia.</text>
</comment>
<comment type="similarity">
    <text evidence="1">Belongs to the L-aspartate dehydrogenase family.</text>
</comment>
<proteinExistence type="inferred from homology"/>